<dbReference type="EC" id="2.7.4.6" evidence="1"/>
<dbReference type="EMBL" id="CP000095">
    <property type="protein sequence ID" value="AAZ58867.1"/>
    <property type="molecule type" value="Genomic_DNA"/>
</dbReference>
<dbReference type="RefSeq" id="WP_011294011.1">
    <property type="nucleotide sequence ID" value="NC_007335.2"/>
</dbReference>
<dbReference type="SMR" id="Q46I11"/>
<dbReference type="STRING" id="59920.PMN2A_1379"/>
<dbReference type="KEGG" id="pmn:PMN2A_1379"/>
<dbReference type="HOGENOM" id="CLU_060216_6_3_3"/>
<dbReference type="OrthoDB" id="9801161at2"/>
<dbReference type="PhylomeDB" id="Q46I11"/>
<dbReference type="Proteomes" id="UP000002535">
    <property type="component" value="Chromosome"/>
</dbReference>
<dbReference type="GO" id="GO:0005737">
    <property type="term" value="C:cytoplasm"/>
    <property type="evidence" value="ECO:0007669"/>
    <property type="project" value="UniProtKB-SubCell"/>
</dbReference>
<dbReference type="GO" id="GO:0005524">
    <property type="term" value="F:ATP binding"/>
    <property type="evidence" value="ECO:0007669"/>
    <property type="project" value="UniProtKB-UniRule"/>
</dbReference>
<dbReference type="GO" id="GO:0046872">
    <property type="term" value="F:metal ion binding"/>
    <property type="evidence" value="ECO:0007669"/>
    <property type="project" value="UniProtKB-KW"/>
</dbReference>
<dbReference type="GO" id="GO:0004550">
    <property type="term" value="F:nucleoside diphosphate kinase activity"/>
    <property type="evidence" value="ECO:0007669"/>
    <property type="project" value="UniProtKB-UniRule"/>
</dbReference>
<dbReference type="GO" id="GO:0006241">
    <property type="term" value="P:CTP biosynthetic process"/>
    <property type="evidence" value="ECO:0007669"/>
    <property type="project" value="UniProtKB-UniRule"/>
</dbReference>
<dbReference type="GO" id="GO:0006183">
    <property type="term" value="P:GTP biosynthetic process"/>
    <property type="evidence" value="ECO:0007669"/>
    <property type="project" value="UniProtKB-UniRule"/>
</dbReference>
<dbReference type="GO" id="GO:0006228">
    <property type="term" value="P:UTP biosynthetic process"/>
    <property type="evidence" value="ECO:0007669"/>
    <property type="project" value="UniProtKB-UniRule"/>
</dbReference>
<dbReference type="CDD" id="cd04413">
    <property type="entry name" value="NDPk_I"/>
    <property type="match status" value="1"/>
</dbReference>
<dbReference type="FunFam" id="3.30.70.141:FF:000002">
    <property type="entry name" value="Nucleoside diphosphate kinase"/>
    <property type="match status" value="1"/>
</dbReference>
<dbReference type="Gene3D" id="3.30.70.141">
    <property type="entry name" value="Nucleoside diphosphate kinase-like domain"/>
    <property type="match status" value="1"/>
</dbReference>
<dbReference type="HAMAP" id="MF_00451">
    <property type="entry name" value="NDP_kinase"/>
    <property type="match status" value="1"/>
</dbReference>
<dbReference type="InterPro" id="IPR034907">
    <property type="entry name" value="NDK-like_dom"/>
</dbReference>
<dbReference type="InterPro" id="IPR036850">
    <property type="entry name" value="NDK-like_dom_sf"/>
</dbReference>
<dbReference type="InterPro" id="IPR001564">
    <property type="entry name" value="Nucleoside_diP_kinase"/>
</dbReference>
<dbReference type="NCBIfam" id="NF001908">
    <property type="entry name" value="PRK00668.1"/>
    <property type="match status" value="1"/>
</dbReference>
<dbReference type="PANTHER" id="PTHR11349">
    <property type="entry name" value="NUCLEOSIDE DIPHOSPHATE KINASE"/>
    <property type="match status" value="1"/>
</dbReference>
<dbReference type="Pfam" id="PF00334">
    <property type="entry name" value="NDK"/>
    <property type="match status" value="1"/>
</dbReference>
<dbReference type="PRINTS" id="PR01243">
    <property type="entry name" value="NUCDPKINASE"/>
</dbReference>
<dbReference type="SMART" id="SM00562">
    <property type="entry name" value="NDK"/>
    <property type="match status" value="1"/>
</dbReference>
<dbReference type="SUPFAM" id="SSF54919">
    <property type="entry name" value="Nucleoside diphosphate kinase, NDK"/>
    <property type="match status" value="1"/>
</dbReference>
<dbReference type="PROSITE" id="PS51374">
    <property type="entry name" value="NDPK_LIKE"/>
    <property type="match status" value="1"/>
</dbReference>
<protein>
    <recommendedName>
        <fullName evidence="1">Nucleoside diphosphate kinase</fullName>
        <shortName evidence="1">NDK</shortName>
        <shortName evidence="1">NDP kinase</shortName>
        <ecNumber evidence="1">2.7.4.6</ecNumber>
    </recommendedName>
    <alternativeName>
        <fullName evidence="1">Nucleoside-2-P kinase</fullName>
    </alternativeName>
</protein>
<evidence type="ECO:0000255" key="1">
    <source>
        <dbReference type="HAMAP-Rule" id="MF_00451"/>
    </source>
</evidence>
<gene>
    <name evidence="1" type="primary">ndk</name>
    <name type="ordered locus">PMN2A_1379</name>
</gene>
<keyword id="KW-0067">ATP-binding</keyword>
<keyword id="KW-0963">Cytoplasm</keyword>
<keyword id="KW-0418">Kinase</keyword>
<keyword id="KW-0460">Magnesium</keyword>
<keyword id="KW-0479">Metal-binding</keyword>
<keyword id="KW-0546">Nucleotide metabolism</keyword>
<keyword id="KW-0547">Nucleotide-binding</keyword>
<keyword id="KW-0597">Phosphoprotein</keyword>
<keyword id="KW-1185">Reference proteome</keyword>
<keyword id="KW-0808">Transferase</keyword>
<proteinExistence type="inferred from homology"/>
<reference key="1">
    <citation type="journal article" date="2007" name="PLoS Genet.">
        <title>Patterns and implications of gene gain and loss in the evolution of Prochlorococcus.</title>
        <authorList>
            <person name="Kettler G.C."/>
            <person name="Martiny A.C."/>
            <person name="Huang K."/>
            <person name="Zucker J."/>
            <person name="Coleman M.L."/>
            <person name="Rodrigue S."/>
            <person name="Chen F."/>
            <person name="Lapidus A."/>
            <person name="Ferriera S."/>
            <person name="Johnson J."/>
            <person name="Steglich C."/>
            <person name="Church G.M."/>
            <person name="Richardson P."/>
            <person name="Chisholm S.W."/>
        </authorList>
    </citation>
    <scope>NUCLEOTIDE SEQUENCE [LARGE SCALE GENOMIC DNA]</scope>
    <source>
        <strain>NATL2A</strain>
    </source>
</reference>
<feature type="chain" id="PRO_0000226568" description="Nucleoside diphosphate kinase">
    <location>
        <begin position="1"/>
        <end position="151"/>
    </location>
</feature>
<feature type="active site" description="Pros-phosphohistidine intermediate" evidence="1">
    <location>
        <position position="117"/>
    </location>
</feature>
<feature type="binding site" evidence="1">
    <location>
        <position position="11"/>
    </location>
    <ligand>
        <name>ATP</name>
        <dbReference type="ChEBI" id="CHEBI:30616"/>
    </ligand>
</feature>
<feature type="binding site" evidence="1">
    <location>
        <position position="59"/>
    </location>
    <ligand>
        <name>ATP</name>
        <dbReference type="ChEBI" id="CHEBI:30616"/>
    </ligand>
</feature>
<feature type="binding site" evidence="1">
    <location>
        <position position="87"/>
    </location>
    <ligand>
        <name>ATP</name>
        <dbReference type="ChEBI" id="CHEBI:30616"/>
    </ligand>
</feature>
<feature type="binding site" evidence="1">
    <location>
        <position position="93"/>
    </location>
    <ligand>
        <name>ATP</name>
        <dbReference type="ChEBI" id="CHEBI:30616"/>
    </ligand>
</feature>
<feature type="binding site" evidence="1">
    <location>
        <position position="104"/>
    </location>
    <ligand>
        <name>ATP</name>
        <dbReference type="ChEBI" id="CHEBI:30616"/>
    </ligand>
</feature>
<feature type="binding site" evidence="1">
    <location>
        <position position="114"/>
    </location>
    <ligand>
        <name>ATP</name>
        <dbReference type="ChEBI" id="CHEBI:30616"/>
    </ligand>
</feature>
<accession>Q46I11</accession>
<comment type="function">
    <text evidence="1">Major role in the synthesis of nucleoside triphosphates other than ATP. The ATP gamma phosphate is transferred to the NDP beta phosphate via a ping-pong mechanism, using a phosphorylated active-site intermediate.</text>
</comment>
<comment type="catalytic activity">
    <reaction evidence="1">
        <text>a 2'-deoxyribonucleoside 5'-diphosphate + ATP = a 2'-deoxyribonucleoside 5'-triphosphate + ADP</text>
        <dbReference type="Rhea" id="RHEA:44640"/>
        <dbReference type="ChEBI" id="CHEBI:30616"/>
        <dbReference type="ChEBI" id="CHEBI:61560"/>
        <dbReference type="ChEBI" id="CHEBI:73316"/>
        <dbReference type="ChEBI" id="CHEBI:456216"/>
        <dbReference type="EC" id="2.7.4.6"/>
    </reaction>
</comment>
<comment type="catalytic activity">
    <reaction evidence="1">
        <text>a ribonucleoside 5'-diphosphate + ATP = a ribonucleoside 5'-triphosphate + ADP</text>
        <dbReference type="Rhea" id="RHEA:18113"/>
        <dbReference type="ChEBI" id="CHEBI:30616"/>
        <dbReference type="ChEBI" id="CHEBI:57930"/>
        <dbReference type="ChEBI" id="CHEBI:61557"/>
        <dbReference type="ChEBI" id="CHEBI:456216"/>
        <dbReference type="EC" id="2.7.4.6"/>
    </reaction>
</comment>
<comment type="cofactor">
    <cofactor evidence="1">
        <name>Mg(2+)</name>
        <dbReference type="ChEBI" id="CHEBI:18420"/>
    </cofactor>
</comment>
<comment type="subunit">
    <text evidence="1">Homotetramer.</text>
</comment>
<comment type="subcellular location">
    <subcellularLocation>
        <location evidence="1">Cytoplasm</location>
    </subcellularLocation>
</comment>
<comment type="similarity">
    <text evidence="1">Belongs to the NDK family.</text>
</comment>
<sequence length="151" mass="16660">MTLERTFVAIKPDGVQRGLIAEILGRFETKGFKLVGLKQLTPSKELAEKHYGVHKDRPFFSGLVDFITSGPVIAMVWEGEGVIASARKLIGATKPLEAEPGTIRGDLAVNIGRNVIHGSDGSDTAVFEINLWFQENELVDWNPSDQAWRVE</sequence>
<name>NDK_PROMT</name>
<organism>
    <name type="scientific">Prochlorococcus marinus (strain NATL2A)</name>
    <dbReference type="NCBI Taxonomy" id="59920"/>
    <lineage>
        <taxon>Bacteria</taxon>
        <taxon>Bacillati</taxon>
        <taxon>Cyanobacteriota</taxon>
        <taxon>Cyanophyceae</taxon>
        <taxon>Synechococcales</taxon>
        <taxon>Prochlorococcaceae</taxon>
        <taxon>Prochlorococcus</taxon>
    </lineage>
</organism>